<proteinExistence type="evidence at protein level"/>
<reference key="1">
    <citation type="journal article" date="2016" name="Plant Cell">
        <title>A geranylfarnesyl diphosphate synthase provides the precursor for sesterterpenoid (C25) formation in the glandular trichomes of the mint species Leucosceptrum canum.</title>
        <authorList>
            <person name="Liu Y."/>
            <person name="Luo S.-H."/>
            <person name="Schmidt A."/>
            <person name="Wang G.-D."/>
            <person name="Sun G.-L."/>
            <person name="Grant M."/>
            <person name="Kuang C."/>
            <person name="Yang M.-J."/>
            <person name="Jing S.-X."/>
            <person name="Li C.-H."/>
            <person name="Schneider B."/>
            <person name="Gershenzon J."/>
            <person name="Li S.-H."/>
        </authorList>
    </citation>
    <scope>NUCLEOTIDE SEQUENCE [MRNA]</scope>
    <scope>FUNCTION</scope>
    <scope>CATALYTIC ACTIVITY</scope>
    <scope>SUBCELLULAR LOCATION</scope>
    <scope>BIOPHYSICOCHEMICAL PROPERTIES</scope>
    <scope>TISSUE SPECIFICITY</scope>
    <scope>INDUCTION BY JASMONIC ACID AND SALICYLIC ACID</scope>
</reference>
<reference key="2">
    <citation type="journal article" date="2019" name="Nat. Prod. Rep.">
        <title>Non-volatile natural products in plant glandular trichomes: chemistry, biological activities and biosynthesis.</title>
        <authorList>
            <person name="Liu Y."/>
            <person name="Jing S.-X."/>
            <person name="Luo S.-H."/>
            <person name="Li S.-H."/>
        </authorList>
    </citation>
    <scope>PATHWAY</scope>
    <scope>REVIEW</scope>
</reference>
<comment type="function">
    <text evidence="5">Involved in the biosynthesis of leucosceptrane sesterterpenoids natural products, which are playing defensive roles toward herbivorus insects (e.g. Spodoptera exigua) (PubMed:26941091). Catalyzes the condensation of isopentenyl pyrophosphate (IDP) with the allylic pyrophosphates to yield geranylfarnesyl diphosphate (GFDP), the C(25) prenyl diphosphate precursor to all sesterterpenoids (PubMed:26941091). Geranylgeranyl diphosphate (GGPP) is the preferred substrate, however dimethylallyl diphosphate (DMADP), farnesyl diphosphate (FDP) and geranyl diphosphate (GDP) can also be used as allylic substrate (PubMed:26941091).</text>
</comment>
<comment type="catalytic activity">
    <reaction evidence="5">
        <text>isopentenyl diphosphate + (2E,6E,10E)-geranylgeranyl diphosphate = (2E,6E,10E,14E)-geranylfarnesyl diphosphate + diphosphate</text>
        <dbReference type="Rhea" id="RHEA:25694"/>
        <dbReference type="ChEBI" id="CHEBI:33019"/>
        <dbReference type="ChEBI" id="CHEBI:57907"/>
        <dbReference type="ChEBI" id="CHEBI:58756"/>
        <dbReference type="ChEBI" id="CHEBI:128769"/>
        <dbReference type="EC" id="2.5.1.81"/>
    </reaction>
    <physiologicalReaction direction="left-to-right" evidence="5">
        <dbReference type="Rhea" id="RHEA:25695"/>
    </physiologicalReaction>
</comment>
<comment type="catalytic activity">
    <reaction evidence="5">
        <text>2 isopentenyl diphosphate + (2E,6E)-farnesyl diphosphate = (2E,6E,10E,14E)-geranylfarnesyl diphosphate + 2 diphosphate</text>
        <dbReference type="Rhea" id="RHEA:66852"/>
        <dbReference type="ChEBI" id="CHEBI:33019"/>
        <dbReference type="ChEBI" id="CHEBI:57907"/>
        <dbReference type="ChEBI" id="CHEBI:128769"/>
        <dbReference type="ChEBI" id="CHEBI:175763"/>
    </reaction>
    <physiologicalReaction direction="left-to-right" evidence="5">
        <dbReference type="Rhea" id="RHEA:66853"/>
    </physiologicalReaction>
</comment>
<comment type="catalytic activity">
    <reaction evidence="5">
        <text>3 isopentenyl diphosphate + (2E)-geranyl diphosphate = (2E,6E,10E,14E)-geranylfarnesyl diphosphate + 3 diphosphate</text>
        <dbReference type="Rhea" id="RHEA:66856"/>
        <dbReference type="ChEBI" id="CHEBI:33019"/>
        <dbReference type="ChEBI" id="CHEBI:57907"/>
        <dbReference type="ChEBI" id="CHEBI:58057"/>
        <dbReference type="ChEBI" id="CHEBI:128769"/>
    </reaction>
    <physiologicalReaction direction="left-to-right" evidence="5">
        <dbReference type="Rhea" id="RHEA:66857"/>
    </physiologicalReaction>
</comment>
<comment type="catalytic activity">
    <reaction evidence="5">
        <text>4 isopentenyl diphosphate + dimethylallyl diphosphate = (2E,6E,10E,14E)-geranylfarnesyl diphosphate + 4 diphosphate</text>
        <dbReference type="Rhea" id="RHEA:66860"/>
        <dbReference type="ChEBI" id="CHEBI:33019"/>
        <dbReference type="ChEBI" id="CHEBI:57623"/>
        <dbReference type="ChEBI" id="CHEBI:57907"/>
        <dbReference type="ChEBI" id="CHEBI:128769"/>
    </reaction>
    <physiologicalReaction direction="left-to-right" evidence="5">
        <dbReference type="Rhea" id="RHEA:66861"/>
    </physiologicalReaction>
</comment>
<comment type="cofactor">
    <cofactor evidence="1">
        <name>Mg(2+)</name>
        <dbReference type="ChEBI" id="CHEBI:18420"/>
    </cofactor>
    <text evidence="1">Binds 2 Mg(2+) ions per subunit.</text>
</comment>
<comment type="biophysicochemical properties">
    <kinetics>
        <KM evidence="5">34.89 uM for dimethylallyl diphosphate (in the presence of isopentenyl diphosphate)</KM>
        <KM evidence="5">3.04 uM for isopentenyl diphosphate (in the presence of geranylgeranyl diphosphate)</KM>
        <KM evidence="5">6.28 uM for geranyl diphosphate (in the presence of isopentenyl diphosphate)</KM>
        <KM evidence="5">4.1 uM for farnesyl diphosphate (in the presence of isopentenyl diphosphate)</KM>
        <KM evidence="5">1.65 uM for geranylgeranyl diphosphate (in the presence of isopentenyl diphosphate)</KM>
        <text evidence="5">kcat is 16.9x10(-6) sec(-1) with dimethylallyl diphosphate as substrate (in the presence of isopentenyl diphosphate) (PubMed:26941091). kcat is 8.2x10(-6) sec(-1) with isopentenyl diphosphate as substrate (in the presence of geranylgeranyl diphosphate) (PubMed:26941091). kcat is 6.16x10(-6) sec(-1) with geranyl diphosphate as substrate (in the presence of isopentenyl diphosphate) (PubMed:26941091). kcat is 7.19x10(-6) sec(-1) with farnesyl diphosphate as substrate (in the presence of isopentenyl diphosphate) (PubMed:26941091). kcat is 5.17x10(-6) sec(-1) with geranylgeranyl diphosphate as substrate (in the presence of isopentenyl diphosphate) (PubMed:26941091).</text>
    </kinetics>
</comment>
<comment type="pathway">
    <text evidence="8">Secondary metabolite biosynthesis; terpenoid biosynthesis.</text>
</comment>
<comment type="pathway">
    <text evidence="5">Isoprenoid biosynthesis.</text>
</comment>
<comment type="subunit">
    <text evidence="2">Monomer.</text>
</comment>
<comment type="subcellular location">
    <subcellularLocation>
        <location evidence="5">Plastid</location>
        <location evidence="5">Chloroplast</location>
    </subcellularLocation>
</comment>
<comment type="tissue specificity">
    <text evidence="5">Strongly expressed in glandular trichomes, and, at low levels, in leaves, stems and flowers.</text>
</comment>
<comment type="induction">
    <text evidence="5">Induced by jasmonic acid, thus triggering sesterterpenoids accumulation and reducing feeding and growth of the herbivorus insect Spodoptera exigua (PubMed:26941091). Accumulates transiently after salicylic acid treatment (PubMed:26941091).</text>
</comment>
<comment type="similarity">
    <text evidence="7">Belongs to the FPP/GGPP synthase family.</text>
</comment>
<feature type="transit peptide" description="Chloroplast" evidence="4">
    <location>
        <begin position="1"/>
        <end position="51"/>
    </location>
</feature>
<feature type="chain" id="PRO_0000452691" description="Geranylfarnesyl diphosphate synthase, chloroplastic">
    <location>
        <begin position="52"/>
        <end position="364"/>
    </location>
</feature>
<feature type="binding site" evidence="3">
    <location>
        <position position="72"/>
    </location>
    <ligand>
        <name>isopentenyl diphosphate</name>
        <dbReference type="ChEBI" id="CHEBI:128769"/>
    </ligand>
</feature>
<feature type="binding site" evidence="1">
    <location>
        <position position="111"/>
    </location>
    <ligand>
        <name>isopentenyl diphosphate</name>
        <dbReference type="ChEBI" id="CHEBI:128769"/>
    </ligand>
</feature>
<feature type="binding site" evidence="3">
    <location>
        <position position="143"/>
    </location>
    <ligand>
        <name>isopentenyl diphosphate</name>
        <dbReference type="ChEBI" id="CHEBI:128769"/>
    </ligand>
</feature>
<feature type="binding site" evidence="3">
    <location>
        <position position="150"/>
    </location>
    <ligand>
        <name>Mg(2+)</name>
        <dbReference type="ChEBI" id="CHEBI:18420"/>
        <label>1</label>
    </ligand>
</feature>
<feature type="binding site" evidence="3">
    <location>
        <position position="150"/>
    </location>
    <ligand>
        <name>Mg(2+)</name>
        <dbReference type="ChEBI" id="CHEBI:18420"/>
        <label>2</label>
    </ligand>
</feature>
<feature type="binding site" evidence="3">
    <location>
        <position position="156"/>
    </location>
    <ligand>
        <name>Mg(2+)</name>
        <dbReference type="ChEBI" id="CHEBI:18420"/>
        <label>1</label>
    </ligand>
</feature>
<feature type="binding site" evidence="3">
    <location>
        <position position="156"/>
    </location>
    <ligand>
        <name>Mg(2+)</name>
        <dbReference type="ChEBI" id="CHEBI:18420"/>
        <label>2</label>
    </ligand>
</feature>
<feature type="binding site" evidence="3">
    <location>
        <position position="161"/>
    </location>
    <ligand>
        <name>dimethylallyl diphosphate</name>
        <dbReference type="ChEBI" id="CHEBI:57623"/>
    </ligand>
</feature>
<feature type="binding site" evidence="3">
    <location>
        <position position="162"/>
    </location>
    <ligand>
        <name>isopentenyl diphosphate</name>
        <dbReference type="ChEBI" id="CHEBI:128769"/>
    </ligand>
</feature>
<feature type="binding site" evidence="3">
    <location>
        <position position="249"/>
    </location>
    <ligand>
        <name>dimethylallyl diphosphate</name>
        <dbReference type="ChEBI" id="CHEBI:57623"/>
    </ligand>
</feature>
<feature type="binding site" evidence="3">
    <location>
        <position position="250"/>
    </location>
    <ligand>
        <name>dimethylallyl diphosphate</name>
        <dbReference type="ChEBI" id="CHEBI:57623"/>
    </ligand>
</feature>
<feature type="binding site" evidence="3">
    <location>
        <position position="287"/>
    </location>
    <ligand>
        <name>dimethylallyl diphosphate</name>
        <dbReference type="ChEBI" id="CHEBI:57623"/>
    </ligand>
</feature>
<feature type="binding site" evidence="3">
    <location>
        <position position="294"/>
    </location>
    <ligand>
        <name>dimethylallyl diphosphate</name>
        <dbReference type="ChEBI" id="CHEBI:57623"/>
    </ligand>
</feature>
<feature type="binding site" evidence="3">
    <location>
        <position position="304"/>
    </location>
    <ligand>
        <name>dimethylallyl diphosphate</name>
        <dbReference type="ChEBI" id="CHEBI:57623"/>
    </ligand>
</feature>
<feature type="binding site" evidence="3">
    <location>
        <position position="314"/>
    </location>
    <ligand>
        <name>dimethylallyl diphosphate</name>
        <dbReference type="ChEBI" id="CHEBI:57623"/>
    </ligand>
</feature>
<dbReference type="EC" id="2.5.1.81" evidence="5"/>
<dbReference type="EMBL" id="KT312959">
    <property type="protein sequence ID" value="ALT16903.1"/>
    <property type="molecule type" value="mRNA"/>
</dbReference>
<dbReference type="SMR" id="A0A0U3BRC5"/>
<dbReference type="UniPathway" id="UPA00213"/>
<dbReference type="GO" id="GO:0009507">
    <property type="term" value="C:chloroplast"/>
    <property type="evidence" value="ECO:0000314"/>
    <property type="project" value="UniProtKB"/>
</dbReference>
<dbReference type="GO" id="GO:0044687">
    <property type="term" value="F:geranylfarnesyl diphosphate synthase activity"/>
    <property type="evidence" value="ECO:0000314"/>
    <property type="project" value="UniProtKB"/>
</dbReference>
<dbReference type="GO" id="GO:0004311">
    <property type="term" value="F:geranylgeranyl diphosphate synthase activity"/>
    <property type="evidence" value="ECO:0007669"/>
    <property type="project" value="TreeGrafter"/>
</dbReference>
<dbReference type="GO" id="GO:0046872">
    <property type="term" value="F:metal ion binding"/>
    <property type="evidence" value="ECO:0007669"/>
    <property type="project" value="UniProtKB-KW"/>
</dbReference>
<dbReference type="GO" id="GO:0016740">
    <property type="term" value="F:transferase activity"/>
    <property type="evidence" value="ECO:0000314"/>
    <property type="project" value="UniProtKB"/>
</dbReference>
<dbReference type="GO" id="GO:0080027">
    <property type="term" value="P:response to herbivore"/>
    <property type="evidence" value="ECO:0000314"/>
    <property type="project" value="UniProtKB"/>
</dbReference>
<dbReference type="GO" id="GO:0009625">
    <property type="term" value="P:response to insect"/>
    <property type="evidence" value="ECO:0000314"/>
    <property type="project" value="UniProtKB"/>
</dbReference>
<dbReference type="GO" id="GO:0009753">
    <property type="term" value="P:response to jasmonic acid"/>
    <property type="evidence" value="ECO:0000270"/>
    <property type="project" value="UniProtKB"/>
</dbReference>
<dbReference type="GO" id="GO:0009751">
    <property type="term" value="P:response to salicylic acid"/>
    <property type="evidence" value="ECO:0000270"/>
    <property type="project" value="UniProtKB"/>
</dbReference>
<dbReference type="GO" id="GO:0016114">
    <property type="term" value="P:terpenoid biosynthetic process"/>
    <property type="evidence" value="ECO:0000314"/>
    <property type="project" value="UniProtKB"/>
</dbReference>
<dbReference type="CDD" id="cd00685">
    <property type="entry name" value="Trans_IPPS_HT"/>
    <property type="match status" value="1"/>
</dbReference>
<dbReference type="FunFam" id="1.10.600.10:FF:000001">
    <property type="entry name" value="Geranylgeranyl diphosphate synthase"/>
    <property type="match status" value="1"/>
</dbReference>
<dbReference type="Gene3D" id="1.10.600.10">
    <property type="entry name" value="Farnesyl Diphosphate Synthase"/>
    <property type="match status" value="1"/>
</dbReference>
<dbReference type="InterPro" id="IPR008949">
    <property type="entry name" value="Isoprenoid_synthase_dom_sf"/>
</dbReference>
<dbReference type="InterPro" id="IPR000092">
    <property type="entry name" value="Polyprenyl_synt"/>
</dbReference>
<dbReference type="InterPro" id="IPR033749">
    <property type="entry name" value="Polyprenyl_synt_CS"/>
</dbReference>
<dbReference type="InterPro" id="IPR053378">
    <property type="entry name" value="Prenyl_diphosphate_synthase"/>
</dbReference>
<dbReference type="NCBIfam" id="NF045485">
    <property type="entry name" value="FPPsyn"/>
    <property type="match status" value="1"/>
</dbReference>
<dbReference type="PANTHER" id="PTHR43281">
    <property type="entry name" value="FARNESYL DIPHOSPHATE SYNTHASE"/>
    <property type="match status" value="1"/>
</dbReference>
<dbReference type="PANTHER" id="PTHR43281:SF24">
    <property type="entry name" value="OS07G0580900 PROTEIN"/>
    <property type="match status" value="1"/>
</dbReference>
<dbReference type="Pfam" id="PF00348">
    <property type="entry name" value="polyprenyl_synt"/>
    <property type="match status" value="1"/>
</dbReference>
<dbReference type="SFLD" id="SFLDS00005">
    <property type="entry name" value="Isoprenoid_Synthase_Type_I"/>
    <property type="match status" value="1"/>
</dbReference>
<dbReference type="SFLD" id="SFLDG01017">
    <property type="entry name" value="Polyprenyl_Transferase_Like"/>
    <property type="match status" value="1"/>
</dbReference>
<dbReference type="SUPFAM" id="SSF48576">
    <property type="entry name" value="Terpenoid synthases"/>
    <property type="match status" value="1"/>
</dbReference>
<dbReference type="PROSITE" id="PS00723">
    <property type="entry name" value="POLYPRENYL_SYNTHASE_1"/>
    <property type="match status" value="1"/>
</dbReference>
<evidence type="ECO:0000250" key="1">
    <source>
        <dbReference type="UniProtKB" id="P14324"/>
    </source>
</evidence>
<evidence type="ECO:0000250" key="2">
    <source>
        <dbReference type="UniProtKB" id="P34802"/>
    </source>
</evidence>
<evidence type="ECO:0000250" key="3">
    <source>
        <dbReference type="UniProtKB" id="Q12051"/>
    </source>
</evidence>
<evidence type="ECO:0000255" key="4"/>
<evidence type="ECO:0000269" key="5">
    <source>
    </source>
</evidence>
<evidence type="ECO:0000303" key="6">
    <source>
    </source>
</evidence>
<evidence type="ECO:0000305" key="7"/>
<evidence type="ECO:0000305" key="8">
    <source>
    </source>
</evidence>
<organism>
    <name type="scientific">Leucosceptrum canum</name>
    <name type="common">Hairy white-wand</name>
    <name type="synonym">Clerodendron leucosceptrum</name>
    <dbReference type="NCBI Taxonomy" id="694369"/>
    <lineage>
        <taxon>Eukaryota</taxon>
        <taxon>Viridiplantae</taxon>
        <taxon>Streptophyta</taxon>
        <taxon>Embryophyta</taxon>
        <taxon>Tracheophyta</taxon>
        <taxon>Spermatophyta</taxon>
        <taxon>Magnoliopsida</taxon>
        <taxon>eudicotyledons</taxon>
        <taxon>Gunneridae</taxon>
        <taxon>Pentapetalae</taxon>
        <taxon>asterids</taxon>
        <taxon>lamiids</taxon>
        <taxon>Lamiales</taxon>
        <taxon>Lamiaceae</taxon>
        <taxon>Lamioideae</taxon>
        <taxon>Pogostemoneae</taxon>
        <taxon>Leucosceptrum</taxon>
    </lineage>
</organism>
<gene>
    <name evidence="6" type="primary">GFDPS</name>
    <name evidence="6" type="synonym">IDS3</name>
</gene>
<accession>A0A0U3BRC5</accession>
<keyword id="KW-0150">Chloroplast</keyword>
<keyword id="KW-0414">Isoprene biosynthesis</keyword>
<keyword id="KW-0460">Magnesium</keyword>
<keyword id="KW-0479">Metal-binding</keyword>
<keyword id="KW-0934">Plastid</keyword>
<keyword id="KW-0808">Transferase</keyword>
<keyword id="KW-0809">Transit peptide</keyword>
<name>GFDPS_LEUCN</name>
<protein>
    <recommendedName>
        <fullName evidence="6">Geranylfarnesyl diphosphate synthase, chloroplastic</fullName>
        <shortName evidence="6">LcGFDPS</shortName>
        <ecNumber evidence="5">2.5.1.81</ecNumber>
    </recommendedName>
</protein>
<sequence length="364" mass="39476">MSHCTIFLYKYFPGKPRYQHCSFLHPLNHKLKSLFLPITGSRFLSNSTFSVSDSAHSHQAKPHVRNAQFDFKAYMLEKITAVNQALDAALPVREPVKIHEAMRYSLLLGGKRICPIVCLAACHLVGGDESTAMPSAAALEMIHAMSLMHDDLPCMDNDDLRRGRPSNHVVFGEGATVLAGYALIARAFEHIATATQGVGPGKILRVIGELAQLIGAEGVVGGQVVDLRCGGEGQMAIGLEQLEYIHLHKTAASVEASAVAGAVLGGASEEEIERLRKYSRSAGLLFQVVDDILDVTKSSEELGKTAGKDLAAGKTTYPKLLGMEKSREMAEKLKREAQEQLLGFDPIKAAPLIALVDFIAYRDK</sequence>